<protein>
    <recommendedName>
        <fullName evidence="1">Chorismate synthase</fullName>
        <shortName evidence="1">CS</shortName>
        <ecNumber evidence="1">4.2.3.5</ecNumber>
    </recommendedName>
    <alternativeName>
        <fullName evidence="1">5-enolpyruvylshikimate-3-phosphate phospholyase</fullName>
    </alternativeName>
</protein>
<comment type="function">
    <text evidence="1">Catalyzes the anti-1,4-elimination of the C-3 phosphate and the C-6 proR hydrogen from 5-enolpyruvylshikimate-3-phosphate (EPSP) to yield chorismate, which is the branch point compound that serves as the starting substrate for the three terminal pathways of aromatic amino acid biosynthesis. This reaction introduces a second double bond into the aromatic ring system.</text>
</comment>
<comment type="catalytic activity">
    <reaction evidence="1">
        <text>5-O-(1-carboxyvinyl)-3-phosphoshikimate = chorismate + phosphate</text>
        <dbReference type="Rhea" id="RHEA:21020"/>
        <dbReference type="ChEBI" id="CHEBI:29748"/>
        <dbReference type="ChEBI" id="CHEBI:43474"/>
        <dbReference type="ChEBI" id="CHEBI:57701"/>
        <dbReference type="EC" id="4.2.3.5"/>
    </reaction>
</comment>
<comment type="cofactor">
    <cofactor evidence="1">
        <name>FMNH2</name>
        <dbReference type="ChEBI" id="CHEBI:57618"/>
    </cofactor>
    <text evidence="1">Reduced FMN (FMNH(2)).</text>
</comment>
<comment type="pathway">
    <text evidence="1">Metabolic intermediate biosynthesis; chorismate biosynthesis; chorismate from D-erythrose 4-phosphate and phosphoenolpyruvate: step 7/7.</text>
</comment>
<comment type="subunit">
    <text evidence="1">Homotetramer.</text>
</comment>
<comment type="similarity">
    <text evidence="1">Belongs to the chorismate synthase family.</text>
</comment>
<gene>
    <name evidence="1" type="primary">aroC</name>
    <name type="ordered locus">LMHCC_0628</name>
</gene>
<evidence type="ECO:0000255" key="1">
    <source>
        <dbReference type="HAMAP-Rule" id="MF_00300"/>
    </source>
</evidence>
<evidence type="ECO:0000256" key="2">
    <source>
        <dbReference type="SAM" id="MobiDB-lite"/>
    </source>
</evidence>
<feature type="chain" id="PRO_1000132777" description="Chorismate synthase">
    <location>
        <begin position="1"/>
        <end position="388"/>
    </location>
</feature>
<feature type="region of interest" description="Disordered" evidence="2">
    <location>
        <begin position="95"/>
        <end position="118"/>
    </location>
</feature>
<feature type="binding site" evidence="1">
    <location>
        <position position="39"/>
    </location>
    <ligand>
        <name>NADP(+)</name>
        <dbReference type="ChEBI" id="CHEBI:58349"/>
    </ligand>
</feature>
<feature type="binding site" evidence="1">
    <location>
        <position position="45"/>
    </location>
    <ligand>
        <name>NADP(+)</name>
        <dbReference type="ChEBI" id="CHEBI:58349"/>
    </ligand>
</feature>
<feature type="binding site" evidence="1">
    <location>
        <begin position="130"/>
        <end position="132"/>
    </location>
    <ligand>
        <name>FMN</name>
        <dbReference type="ChEBI" id="CHEBI:58210"/>
    </ligand>
</feature>
<feature type="binding site" evidence="1">
    <location>
        <begin position="251"/>
        <end position="252"/>
    </location>
    <ligand>
        <name>FMN</name>
        <dbReference type="ChEBI" id="CHEBI:58210"/>
    </ligand>
</feature>
<feature type="binding site" evidence="1">
    <location>
        <position position="296"/>
    </location>
    <ligand>
        <name>FMN</name>
        <dbReference type="ChEBI" id="CHEBI:58210"/>
    </ligand>
</feature>
<feature type="binding site" evidence="1">
    <location>
        <begin position="311"/>
        <end position="315"/>
    </location>
    <ligand>
        <name>FMN</name>
        <dbReference type="ChEBI" id="CHEBI:58210"/>
    </ligand>
</feature>
<feature type="binding site" evidence="1">
    <location>
        <position position="337"/>
    </location>
    <ligand>
        <name>FMN</name>
        <dbReference type="ChEBI" id="CHEBI:58210"/>
    </ligand>
</feature>
<name>AROC_LISMH</name>
<reference key="1">
    <citation type="journal article" date="2011" name="J. Bacteriol.">
        <title>Genome sequence of lineage III Listeria monocytogenes strain HCC23.</title>
        <authorList>
            <person name="Steele C.L."/>
            <person name="Donaldson J.R."/>
            <person name="Paul D."/>
            <person name="Banes M.M."/>
            <person name="Arick T."/>
            <person name="Bridges S.M."/>
            <person name="Lawrence M.L."/>
        </authorList>
    </citation>
    <scope>NUCLEOTIDE SEQUENCE [LARGE SCALE GENOMIC DNA]</scope>
    <source>
        <strain>HCC23</strain>
    </source>
</reference>
<proteinExistence type="inferred from homology"/>
<organism>
    <name type="scientific">Listeria monocytogenes serotype 4a (strain HCC23)</name>
    <dbReference type="NCBI Taxonomy" id="552536"/>
    <lineage>
        <taxon>Bacteria</taxon>
        <taxon>Bacillati</taxon>
        <taxon>Bacillota</taxon>
        <taxon>Bacilli</taxon>
        <taxon>Bacillales</taxon>
        <taxon>Listeriaceae</taxon>
        <taxon>Listeria</taxon>
    </lineage>
</organism>
<dbReference type="EC" id="4.2.3.5" evidence="1"/>
<dbReference type="EMBL" id="CP001175">
    <property type="protein sequence ID" value="ACK38984.1"/>
    <property type="molecule type" value="Genomic_DNA"/>
</dbReference>
<dbReference type="RefSeq" id="WP_003728000.1">
    <property type="nucleotide sequence ID" value="NC_011660.1"/>
</dbReference>
<dbReference type="SMR" id="B8DBZ8"/>
<dbReference type="KEGG" id="lmh:LMHCC_0628"/>
<dbReference type="HOGENOM" id="CLU_034547_2_0_9"/>
<dbReference type="UniPathway" id="UPA00053">
    <property type="reaction ID" value="UER00090"/>
</dbReference>
<dbReference type="GO" id="GO:0005829">
    <property type="term" value="C:cytosol"/>
    <property type="evidence" value="ECO:0007669"/>
    <property type="project" value="TreeGrafter"/>
</dbReference>
<dbReference type="GO" id="GO:0004107">
    <property type="term" value="F:chorismate synthase activity"/>
    <property type="evidence" value="ECO:0007669"/>
    <property type="project" value="UniProtKB-UniRule"/>
</dbReference>
<dbReference type="GO" id="GO:0010181">
    <property type="term" value="F:FMN binding"/>
    <property type="evidence" value="ECO:0007669"/>
    <property type="project" value="TreeGrafter"/>
</dbReference>
<dbReference type="GO" id="GO:0008652">
    <property type="term" value="P:amino acid biosynthetic process"/>
    <property type="evidence" value="ECO:0007669"/>
    <property type="project" value="UniProtKB-KW"/>
</dbReference>
<dbReference type="GO" id="GO:0009073">
    <property type="term" value="P:aromatic amino acid family biosynthetic process"/>
    <property type="evidence" value="ECO:0007669"/>
    <property type="project" value="UniProtKB-KW"/>
</dbReference>
<dbReference type="GO" id="GO:0009423">
    <property type="term" value="P:chorismate biosynthetic process"/>
    <property type="evidence" value="ECO:0007669"/>
    <property type="project" value="UniProtKB-UniRule"/>
</dbReference>
<dbReference type="CDD" id="cd07304">
    <property type="entry name" value="Chorismate_synthase"/>
    <property type="match status" value="1"/>
</dbReference>
<dbReference type="FunFam" id="3.60.150.10:FF:000002">
    <property type="entry name" value="Chorismate synthase"/>
    <property type="match status" value="1"/>
</dbReference>
<dbReference type="Gene3D" id="3.60.150.10">
    <property type="entry name" value="Chorismate synthase AroC"/>
    <property type="match status" value="1"/>
</dbReference>
<dbReference type="HAMAP" id="MF_00300">
    <property type="entry name" value="Chorismate_synth"/>
    <property type="match status" value="1"/>
</dbReference>
<dbReference type="InterPro" id="IPR000453">
    <property type="entry name" value="Chorismate_synth"/>
</dbReference>
<dbReference type="InterPro" id="IPR035904">
    <property type="entry name" value="Chorismate_synth_AroC_sf"/>
</dbReference>
<dbReference type="InterPro" id="IPR020541">
    <property type="entry name" value="Chorismate_synthase_CS"/>
</dbReference>
<dbReference type="NCBIfam" id="TIGR00033">
    <property type="entry name" value="aroC"/>
    <property type="match status" value="1"/>
</dbReference>
<dbReference type="NCBIfam" id="NF003793">
    <property type="entry name" value="PRK05382.1"/>
    <property type="match status" value="1"/>
</dbReference>
<dbReference type="PANTHER" id="PTHR21085">
    <property type="entry name" value="CHORISMATE SYNTHASE"/>
    <property type="match status" value="1"/>
</dbReference>
<dbReference type="PANTHER" id="PTHR21085:SF0">
    <property type="entry name" value="CHORISMATE SYNTHASE"/>
    <property type="match status" value="1"/>
</dbReference>
<dbReference type="Pfam" id="PF01264">
    <property type="entry name" value="Chorismate_synt"/>
    <property type="match status" value="1"/>
</dbReference>
<dbReference type="PIRSF" id="PIRSF001456">
    <property type="entry name" value="Chorismate_synth"/>
    <property type="match status" value="1"/>
</dbReference>
<dbReference type="SUPFAM" id="SSF103263">
    <property type="entry name" value="Chorismate synthase, AroC"/>
    <property type="match status" value="1"/>
</dbReference>
<dbReference type="PROSITE" id="PS00787">
    <property type="entry name" value="CHORISMATE_SYNTHASE_1"/>
    <property type="match status" value="1"/>
</dbReference>
<dbReference type="PROSITE" id="PS00788">
    <property type="entry name" value="CHORISMATE_SYNTHASE_2"/>
    <property type="match status" value="1"/>
</dbReference>
<dbReference type="PROSITE" id="PS00789">
    <property type="entry name" value="CHORISMATE_SYNTHASE_3"/>
    <property type="match status" value="1"/>
</dbReference>
<accession>B8DBZ8</accession>
<keyword id="KW-0028">Amino-acid biosynthesis</keyword>
<keyword id="KW-0057">Aromatic amino acid biosynthesis</keyword>
<keyword id="KW-0274">FAD</keyword>
<keyword id="KW-0285">Flavoprotein</keyword>
<keyword id="KW-0288">FMN</keyword>
<keyword id="KW-0456">Lyase</keyword>
<keyword id="KW-0521">NADP</keyword>
<sequence>MRYLTAGESHGPGLTTIIEGLPAGMPLLAEDVNKELKRRQGGHGRGARMRIEKDQVQITAGIRHGKTLGAPVAMFVENKDWKHWETVMSIEPVPEKNEKSRRVSRPRPGHADLVGGMKYGHNDMRNVLERSSARETTVRVAAGAVAKKLLHELGIEVAGHVLEIGGTRANLTRDYAVREIQETSEASPVRCLDGVAAEEMMQKIDDAKKNGDTIGGIVEVVVGGVPAGLGSYVQWDKKLDAKIARAIVSINAFKGAEFGVGFEAARKPGSEVMDEILWSKEDGYTRRTNNLGGFEGGMTNGMPIVVRGVMKPIPTLYKPLQSVDIDSKETFNASVERSDSCAVPAASVVAEAVVAWEVAVAVLEKFDGDRFDTLKKHVEEHRNLTKEF</sequence>